<evidence type="ECO:0000256" key="1">
    <source>
        <dbReference type="SAM" id="MobiDB-lite"/>
    </source>
</evidence>
<evidence type="ECO:0000303" key="2">
    <source>
    </source>
</evidence>
<protein>
    <recommendedName>
        <fullName evidence="2">Type IV methyl-directed restriction enzyme EcoKMrr</fullName>
        <shortName evidence="2">EcoKMrr</shortName>
    </recommendedName>
    <alternativeName>
        <fullName>Mrr restriction system protein</fullName>
    </alternativeName>
</protein>
<name>MRR_ECOLI</name>
<organism>
    <name type="scientific">Escherichia coli (strain K12)</name>
    <dbReference type="NCBI Taxonomy" id="83333"/>
    <lineage>
        <taxon>Bacteria</taxon>
        <taxon>Pseudomonadati</taxon>
        <taxon>Pseudomonadota</taxon>
        <taxon>Gammaproteobacteria</taxon>
        <taxon>Enterobacterales</taxon>
        <taxon>Enterobacteriaceae</taxon>
        <taxon>Escherichia</taxon>
    </lineage>
</organism>
<gene>
    <name type="primary">mrr</name>
    <name type="ordered locus">b4351</name>
    <name type="ordered locus">JW4314</name>
</gene>
<dbReference type="EMBL" id="X54198">
    <property type="protein sequence ID" value="CAA38117.1"/>
    <property type="molecule type" value="Genomic_DNA"/>
</dbReference>
<dbReference type="EMBL" id="U14003">
    <property type="protein sequence ID" value="AAA97248.1"/>
    <property type="molecule type" value="Genomic_DNA"/>
</dbReference>
<dbReference type="EMBL" id="U00096">
    <property type="protein sequence ID" value="AAC77307.1"/>
    <property type="molecule type" value="Genomic_DNA"/>
</dbReference>
<dbReference type="EMBL" id="AP009048">
    <property type="protein sequence ID" value="BAE78341.1"/>
    <property type="molecule type" value="Genomic_DNA"/>
</dbReference>
<dbReference type="PIR" id="A40368">
    <property type="entry name" value="A40368"/>
</dbReference>
<dbReference type="RefSeq" id="NP_418771.1">
    <property type="nucleotide sequence ID" value="NC_000913.3"/>
</dbReference>
<dbReference type="RefSeq" id="WP_000217931.1">
    <property type="nucleotide sequence ID" value="NZ_LN832404.1"/>
</dbReference>
<dbReference type="SMR" id="P24202"/>
<dbReference type="BioGRID" id="4262770">
    <property type="interactions" value="59"/>
</dbReference>
<dbReference type="DIP" id="DIP-10259N"/>
<dbReference type="FunCoup" id="P24202">
    <property type="interactions" value="45"/>
</dbReference>
<dbReference type="IntAct" id="P24202">
    <property type="interactions" value="1"/>
</dbReference>
<dbReference type="STRING" id="511145.b4351"/>
<dbReference type="REBASE" id="13381">
    <property type="entry name" value="EcoW3110MrrP"/>
</dbReference>
<dbReference type="REBASE" id="152622">
    <property type="entry name" value="Rsp6212MrrP"/>
</dbReference>
<dbReference type="REBASE" id="152626">
    <property type="entry name" value="Rsp621MrrP"/>
</dbReference>
<dbReference type="REBASE" id="152632">
    <property type="entry name" value="Ret561MrrP"/>
</dbReference>
<dbReference type="REBASE" id="152643">
    <property type="entry name" value="Rsp1341MrrP"/>
</dbReference>
<dbReference type="REBASE" id="152655">
    <property type="entry name" value="Rsp113MrrP"/>
</dbReference>
<dbReference type="REBASE" id="152716">
    <property type="entry name" value="Rsp741MrrP"/>
</dbReference>
<dbReference type="REBASE" id="152738">
    <property type="entry name" value="Rsp871MrrP"/>
</dbReference>
<dbReference type="REBASE" id="203759">
    <property type="entry name" value="Lbr1174ORF1924P"/>
</dbReference>
<dbReference type="REBASE" id="211852">
    <property type="entry name" value="Rsp894MrrP"/>
</dbReference>
<dbReference type="REBASE" id="211890">
    <property type="entry name" value="Rsp894Mrr2P"/>
</dbReference>
<dbReference type="REBASE" id="2906">
    <property type="entry name" value="EcoKMrr"/>
</dbReference>
<dbReference type="REBASE" id="296186">
    <property type="entry name" value="Bve83MrrP"/>
</dbReference>
<dbReference type="REBASE" id="441389">
    <property type="entry name" value="EcoBL21FMrrP"/>
</dbReference>
<dbReference type="jPOST" id="P24202"/>
<dbReference type="PaxDb" id="511145-b4351"/>
<dbReference type="EnsemblBacteria" id="AAC77307">
    <property type="protein sequence ID" value="AAC77307"/>
    <property type="gene ID" value="b4351"/>
</dbReference>
<dbReference type="GeneID" id="948898"/>
<dbReference type="KEGG" id="ecj:JW4314"/>
<dbReference type="KEGG" id="eco:b4351"/>
<dbReference type="KEGG" id="ecoc:C3026_23505"/>
<dbReference type="PATRIC" id="fig|1411691.4.peg.2335"/>
<dbReference type="EchoBASE" id="EB0607"/>
<dbReference type="eggNOG" id="COG1715">
    <property type="taxonomic scope" value="Bacteria"/>
</dbReference>
<dbReference type="HOGENOM" id="CLU_063822_2_0_6"/>
<dbReference type="InParanoid" id="P24202"/>
<dbReference type="OMA" id="QAKRWEG"/>
<dbReference type="PhylomeDB" id="P24202"/>
<dbReference type="BioCyc" id="EcoCyc:EG10612-MONOMER"/>
<dbReference type="PRO" id="PR:P24202"/>
<dbReference type="Proteomes" id="UP000000625">
    <property type="component" value="Chromosome"/>
</dbReference>
<dbReference type="GO" id="GO:0043590">
    <property type="term" value="C:bacterial nucleoid"/>
    <property type="evidence" value="ECO:0000314"/>
    <property type="project" value="EcoCyc"/>
</dbReference>
<dbReference type="GO" id="GO:0003677">
    <property type="term" value="F:DNA binding"/>
    <property type="evidence" value="ECO:0007669"/>
    <property type="project" value="InterPro"/>
</dbReference>
<dbReference type="GO" id="GO:0015666">
    <property type="term" value="F:restriction endodeoxyribonuclease activity"/>
    <property type="evidence" value="ECO:0000315"/>
    <property type="project" value="EcoCyc"/>
</dbReference>
<dbReference type="GO" id="GO:0032067">
    <property type="term" value="F:type IV site-specific deoxyribonuclease activity"/>
    <property type="evidence" value="ECO:0000314"/>
    <property type="project" value="EcoCyc"/>
</dbReference>
<dbReference type="GO" id="GO:0009307">
    <property type="term" value="P:DNA restriction-modification system"/>
    <property type="evidence" value="ECO:0007669"/>
    <property type="project" value="UniProtKB-KW"/>
</dbReference>
<dbReference type="GO" id="GO:0051599">
    <property type="term" value="P:response to hydrostatic pressure"/>
    <property type="evidence" value="ECO:0000315"/>
    <property type="project" value="EcoCyc"/>
</dbReference>
<dbReference type="FunFam" id="3.40.1350.10:FF:000018">
    <property type="entry name" value="Mrr restriction system protein"/>
    <property type="match status" value="1"/>
</dbReference>
<dbReference type="Gene3D" id="3.40.1350.10">
    <property type="match status" value="1"/>
</dbReference>
<dbReference type="InterPro" id="IPR025745">
    <property type="entry name" value="Mrr-like_N_dom"/>
</dbReference>
<dbReference type="InterPro" id="IPR011335">
    <property type="entry name" value="Restrct_endonuc-II-like"/>
</dbReference>
<dbReference type="InterPro" id="IPR007560">
    <property type="entry name" value="Restrct_endonuc_IV_Mrr"/>
</dbReference>
<dbReference type="InterPro" id="IPR011856">
    <property type="entry name" value="tRNA_endonuc-like_dom_sf"/>
</dbReference>
<dbReference type="InterPro" id="IPR052906">
    <property type="entry name" value="Type_IV_Methyl-Rstrct_Enzyme"/>
</dbReference>
<dbReference type="PANTHER" id="PTHR30015">
    <property type="entry name" value="MRR RESTRICTION SYSTEM PROTEIN"/>
    <property type="match status" value="1"/>
</dbReference>
<dbReference type="PANTHER" id="PTHR30015:SF7">
    <property type="entry name" value="TYPE IV METHYL-DIRECTED RESTRICTION ENZYME ECOKMRR"/>
    <property type="match status" value="1"/>
</dbReference>
<dbReference type="Pfam" id="PF04471">
    <property type="entry name" value="Mrr_cat"/>
    <property type="match status" value="1"/>
</dbReference>
<dbReference type="Pfam" id="PF14338">
    <property type="entry name" value="Mrr_N"/>
    <property type="match status" value="1"/>
</dbReference>
<dbReference type="SUPFAM" id="SSF52980">
    <property type="entry name" value="Restriction endonuclease-like"/>
    <property type="match status" value="1"/>
</dbReference>
<sequence length="304" mass="33520">MTVPTYDKFIEPVLRYLATKPEGAAARDVHEAAADALGLDDSQRAKVITSGQLVYKNRAGWAHDRLKRAGLSQSLSRGKWCLTPAGFDWVASHPQPMTEQETNHLAFAFVNVKLKSRPDAVDLDPKADSPDHEELAKSSPDDRLDQALKELRDAVADEVLENLLQVSPSRFEVIVLDVLHRLGYGGHRDDLQRVGGTGDGGIDGVISLDKLGLEKVYVQAKRWQNTVGRPELQAFYGALAGQKAKRGVFITTSGFTSQARDFAQSVEGMVLVDGERLVHLMIENEVGVSSRLLKVPKLDMDYFE</sequence>
<accession>P24202</accession>
<accession>Q2M5W5</accession>
<comment type="function">
    <text>Involved in the acceptance of foreign DNA which is modified. Restricts both adenine- and cytosine-methylated DNA.</text>
</comment>
<reference key="1">
    <citation type="journal article" date="1991" name="J. Bacteriol.">
        <title>Characterization and expression of the Escherichia coli Mrr restriction system.</title>
        <authorList>
            <person name="Waite-Rees P.A."/>
            <person name="Keating C.J."/>
            <person name="Moran L.S."/>
            <person name="Slatko B.E."/>
            <person name="Hornstra L.J."/>
            <person name="Benner J.S."/>
        </authorList>
    </citation>
    <scope>NUCLEOTIDE SEQUENCE [GENOMIC DNA]</scope>
    <scope>PROTEIN SEQUENCE OF 1-35</scope>
    <source>
        <strain>K12</strain>
    </source>
</reference>
<reference key="2">
    <citation type="journal article" date="1995" name="Nucleic Acids Res.">
        <title>Analysis of the Escherichia coli genome VI: DNA sequence of the region from 92.8 through 100 minutes.</title>
        <authorList>
            <person name="Burland V.D."/>
            <person name="Plunkett G. III"/>
            <person name="Sofia H.J."/>
            <person name="Daniels D.L."/>
            <person name="Blattner F.R."/>
        </authorList>
    </citation>
    <scope>NUCLEOTIDE SEQUENCE [LARGE SCALE GENOMIC DNA]</scope>
    <source>
        <strain>K12 / MG1655 / ATCC 47076</strain>
    </source>
</reference>
<reference key="3">
    <citation type="journal article" date="1997" name="Science">
        <title>The complete genome sequence of Escherichia coli K-12.</title>
        <authorList>
            <person name="Blattner F.R."/>
            <person name="Plunkett G. III"/>
            <person name="Bloch C.A."/>
            <person name="Perna N.T."/>
            <person name="Burland V."/>
            <person name="Riley M."/>
            <person name="Collado-Vides J."/>
            <person name="Glasner J.D."/>
            <person name="Rode C.K."/>
            <person name="Mayhew G.F."/>
            <person name="Gregor J."/>
            <person name="Davis N.W."/>
            <person name="Kirkpatrick H.A."/>
            <person name="Goeden M.A."/>
            <person name="Rose D.J."/>
            <person name="Mau B."/>
            <person name="Shao Y."/>
        </authorList>
    </citation>
    <scope>NUCLEOTIDE SEQUENCE [LARGE SCALE GENOMIC DNA]</scope>
    <source>
        <strain>K12 / MG1655 / ATCC 47076</strain>
    </source>
</reference>
<reference key="4">
    <citation type="journal article" date="2006" name="Mol. Syst. Biol.">
        <title>Highly accurate genome sequences of Escherichia coli K-12 strains MG1655 and W3110.</title>
        <authorList>
            <person name="Hayashi K."/>
            <person name="Morooka N."/>
            <person name="Yamamoto Y."/>
            <person name="Fujita K."/>
            <person name="Isono K."/>
            <person name="Choi S."/>
            <person name="Ohtsubo E."/>
            <person name="Baba T."/>
            <person name="Wanner B.L."/>
            <person name="Mori H."/>
            <person name="Horiuchi T."/>
        </authorList>
    </citation>
    <scope>NUCLEOTIDE SEQUENCE [LARGE SCALE GENOMIC DNA]</scope>
    <source>
        <strain>K12 / W3110 / ATCC 27325 / DSM 5911</strain>
    </source>
</reference>
<reference key="5">
    <citation type="journal article" date="1997" name="Electrophoresis">
        <title>Escherichia coli proteome analysis using the gene-protein database.</title>
        <authorList>
            <person name="VanBogelen R.A."/>
            <person name="Abshire K.Z."/>
            <person name="Moldover B."/>
            <person name="Olson E.R."/>
            <person name="Neidhardt F.C."/>
        </authorList>
    </citation>
    <scope>IDENTIFICATION BY 2D-GEL</scope>
</reference>
<reference key="6">
    <citation type="journal article" date="2003" name="Nucleic Acids Res.">
        <title>A nomenclature for restriction enzymes, DNA methyltransferases, homing endonucleases and their genes.</title>
        <authorList>
            <person name="Roberts R.J."/>
            <person name="Belfort M."/>
            <person name="Bestor T."/>
            <person name="Bhagwat A.S."/>
            <person name="Bickle T.A."/>
            <person name="Bitinaite J."/>
            <person name="Blumenthal R.M."/>
            <person name="Degtyarev S.K."/>
            <person name="Dryden D.T."/>
            <person name="Dybvig K."/>
            <person name="Firman K."/>
            <person name="Gromova E.S."/>
            <person name="Gumport R.I."/>
            <person name="Halford S.E."/>
            <person name="Hattman S."/>
            <person name="Heitman J."/>
            <person name="Hornby D.P."/>
            <person name="Janulaitis A."/>
            <person name="Jeltsch A."/>
            <person name="Josephsen J."/>
            <person name="Kiss A."/>
            <person name="Klaenhammer T.R."/>
            <person name="Kobayashi I."/>
            <person name="Kong H."/>
            <person name="Krueger D.H."/>
            <person name="Lacks S."/>
            <person name="Marinus M.G."/>
            <person name="Miyahara M."/>
            <person name="Morgan R.D."/>
            <person name="Murray N.E."/>
            <person name="Nagaraja V."/>
            <person name="Piekarowicz A."/>
            <person name="Pingoud A."/>
            <person name="Raleigh E."/>
            <person name="Rao D.N."/>
            <person name="Reich N."/>
            <person name="Repin V.E."/>
            <person name="Selker E.U."/>
            <person name="Shaw P.C."/>
            <person name="Stein D.C."/>
            <person name="Stoddard B.L."/>
            <person name="Szybalski W."/>
            <person name="Trautner T.A."/>
            <person name="Van Etten J.L."/>
            <person name="Vitor J.M."/>
            <person name="Wilson G.G."/>
            <person name="Xu S.Y."/>
        </authorList>
    </citation>
    <scope>NOMENCLATURE</scope>
</reference>
<feature type="chain" id="PRO_0000077382" description="Type IV methyl-directed restriction enzyme EcoKMrr">
    <location>
        <begin position="1"/>
        <end position="304"/>
    </location>
</feature>
<feature type="region of interest" description="Disordered" evidence="1">
    <location>
        <begin position="120"/>
        <end position="142"/>
    </location>
</feature>
<keyword id="KW-0903">Direct protein sequencing</keyword>
<keyword id="KW-1185">Reference proteome</keyword>
<keyword id="KW-0680">Restriction system</keyword>
<proteinExistence type="evidence at protein level"/>